<proteinExistence type="evidence at protein level"/>
<organism>
    <name type="scientific">Mus musculus</name>
    <name type="common">Mouse</name>
    <dbReference type="NCBI Taxonomy" id="10090"/>
    <lineage>
        <taxon>Eukaryota</taxon>
        <taxon>Metazoa</taxon>
        <taxon>Chordata</taxon>
        <taxon>Craniata</taxon>
        <taxon>Vertebrata</taxon>
        <taxon>Euteleostomi</taxon>
        <taxon>Mammalia</taxon>
        <taxon>Eutheria</taxon>
        <taxon>Euarchontoglires</taxon>
        <taxon>Glires</taxon>
        <taxon>Rodentia</taxon>
        <taxon>Myomorpha</taxon>
        <taxon>Muroidea</taxon>
        <taxon>Muridae</taxon>
        <taxon>Murinae</taxon>
        <taxon>Mus</taxon>
        <taxon>Mus</taxon>
    </lineage>
</organism>
<dbReference type="EC" id="2.7.10.2"/>
<dbReference type="EMBL" id="Y00487">
    <property type="protein sequence ID" value="CAA68544.1"/>
    <property type="status" value="ALT_SEQ"/>
    <property type="molecule type" value="mRNA"/>
</dbReference>
<dbReference type="EMBL" id="J03023">
    <property type="protein sequence ID" value="AAA37305.1"/>
    <property type="status" value="ALT_SEQ"/>
    <property type="molecule type" value="mRNA"/>
</dbReference>
<dbReference type="EMBL" id="AK149736">
    <property type="protein sequence ID" value="BAE29054.1"/>
    <property type="status" value="ALT_SEQ"/>
    <property type="molecule type" value="mRNA"/>
</dbReference>
<dbReference type="EMBL" id="AK150290">
    <property type="protein sequence ID" value="BAE29445.1"/>
    <property type="status" value="ALT_SEQ"/>
    <property type="molecule type" value="mRNA"/>
</dbReference>
<dbReference type="EMBL" id="AK150709">
    <property type="protein sequence ID" value="BAE29787.1"/>
    <property type="status" value="ALT_SEQ"/>
    <property type="molecule type" value="mRNA"/>
</dbReference>
<dbReference type="EMBL" id="AK155975">
    <property type="protein sequence ID" value="BAE33532.1"/>
    <property type="status" value="ALT_SEQ"/>
    <property type="molecule type" value="mRNA"/>
</dbReference>
<dbReference type="EMBL" id="AK165315">
    <property type="protein sequence ID" value="BAE38133.1"/>
    <property type="status" value="ALT_SEQ"/>
    <property type="molecule type" value="mRNA"/>
</dbReference>
<dbReference type="EMBL" id="BC010478">
    <property type="protein sequence ID" value="AAH10478.2"/>
    <property type="molecule type" value="mRNA"/>
</dbReference>
<dbReference type="CCDS" id="CCDS38284.1">
    <molecule id="P08103-1"/>
</dbReference>
<dbReference type="CCDS" id="CCDS50756.1">
    <molecule id="P08103-2"/>
</dbReference>
<dbReference type="PIR" id="A27282">
    <property type="entry name" value="TVMSHC"/>
</dbReference>
<dbReference type="RefSeq" id="NP_001165588.1">
    <molecule id="P08103-2"/>
    <property type="nucleotide sequence ID" value="NM_001172117.1"/>
</dbReference>
<dbReference type="RefSeq" id="NP_034537.2">
    <molecule id="P08103-1"/>
    <property type="nucleotide sequence ID" value="NM_010407.4"/>
</dbReference>
<dbReference type="SMR" id="P08103"/>
<dbReference type="BioGRID" id="200249">
    <property type="interactions" value="13"/>
</dbReference>
<dbReference type="CORUM" id="P08103"/>
<dbReference type="FunCoup" id="P08103">
    <property type="interactions" value="271"/>
</dbReference>
<dbReference type="IntAct" id="P08103">
    <property type="interactions" value="5"/>
</dbReference>
<dbReference type="MINT" id="P08103"/>
<dbReference type="STRING" id="10090.ENSMUSP00000003370"/>
<dbReference type="iPTMnet" id="P08103"/>
<dbReference type="PhosphoSitePlus" id="P08103"/>
<dbReference type="SwissPalm" id="P08103"/>
<dbReference type="jPOST" id="P08103"/>
<dbReference type="PaxDb" id="10090-ENSMUSP00000003370"/>
<dbReference type="PeptideAtlas" id="P08103"/>
<dbReference type="ProteomicsDB" id="270949">
    <molecule id="P08103-1"/>
</dbReference>
<dbReference type="ProteomicsDB" id="270950">
    <molecule id="P08103-2"/>
</dbReference>
<dbReference type="Antibodypedia" id="3921">
    <property type="antibodies" value="600 antibodies from 38 providers"/>
</dbReference>
<dbReference type="DNASU" id="15162"/>
<dbReference type="Ensembl" id="ENSMUST00000109799.8">
    <molecule id="P08103-2"/>
    <property type="protein sequence ID" value="ENSMUSP00000105423.2"/>
    <property type="gene ID" value="ENSMUSG00000003283.16"/>
</dbReference>
<dbReference type="Ensembl" id="ENSMUST00000189688.2">
    <molecule id="P08103-2"/>
    <property type="protein sequence ID" value="ENSMUSP00000141030.2"/>
    <property type="gene ID" value="ENSMUSG00000003283.16"/>
</dbReference>
<dbReference type="GeneID" id="15162"/>
<dbReference type="KEGG" id="mmu:15162"/>
<dbReference type="UCSC" id="uc008nhc.3">
    <molecule id="P08103-1"/>
    <property type="organism name" value="mouse"/>
</dbReference>
<dbReference type="AGR" id="MGI:96052"/>
<dbReference type="CTD" id="3055"/>
<dbReference type="MGI" id="MGI:96052">
    <property type="gene designation" value="Hck"/>
</dbReference>
<dbReference type="VEuPathDB" id="HostDB:ENSMUSG00000003283"/>
<dbReference type="eggNOG" id="KOG0197">
    <property type="taxonomic scope" value="Eukaryota"/>
</dbReference>
<dbReference type="GeneTree" id="ENSGT00940000158738"/>
<dbReference type="HOGENOM" id="CLU_000288_7_2_1"/>
<dbReference type="InParanoid" id="P08103"/>
<dbReference type="OMA" id="CPRDQER"/>
<dbReference type="OrthoDB" id="5237at9989"/>
<dbReference type="PhylomeDB" id="P08103"/>
<dbReference type="BRENDA" id="2.7.10.2">
    <property type="organism ID" value="3474"/>
</dbReference>
<dbReference type="Reactome" id="R-MMU-2029481">
    <property type="pathway name" value="FCGR activation"/>
</dbReference>
<dbReference type="Reactome" id="R-MMU-912631">
    <property type="pathway name" value="Regulation of signaling by CBL"/>
</dbReference>
<dbReference type="Reactome" id="R-MMU-9674555">
    <property type="pathway name" value="Signaling by CSF3 (G-CSF)"/>
</dbReference>
<dbReference type="Reactome" id="R-MMU-9705462">
    <property type="pathway name" value="Inactivation of CSF3 (G-CSF) signaling"/>
</dbReference>
<dbReference type="BioGRID-ORCS" id="15162">
    <property type="hits" value="1 hit in 78 CRISPR screens"/>
</dbReference>
<dbReference type="CD-CODE" id="CE726F99">
    <property type="entry name" value="Postsynaptic density"/>
</dbReference>
<dbReference type="PRO" id="PR:P08103"/>
<dbReference type="Proteomes" id="UP000000589">
    <property type="component" value="Chromosome 2"/>
</dbReference>
<dbReference type="RNAct" id="P08103">
    <property type="molecule type" value="protein"/>
</dbReference>
<dbReference type="Bgee" id="ENSMUSG00000003283">
    <property type="expression patterns" value="Expressed in granulocyte and 145 other cell types or tissues"/>
</dbReference>
<dbReference type="ExpressionAtlas" id="P08103">
    <property type="expression patterns" value="baseline and differential"/>
</dbReference>
<dbReference type="GO" id="GO:0005884">
    <property type="term" value="C:actin filament"/>
    <property type="evidence" value="ECO:0007669"/>
    <property type="project" value="Ensembl"/>
</dbReference>
<dbReference type="GO" id="GO:0005901">
    <property type="term" value="C:caveola"/>
    <property type="evidence" value="ECO:0007669"/>
    <property type="project" value="UniProtKB-SubCell"/>
</dbReference>
<dbReference type="GO" id="GO:0042995">
    <property type="term" value="C:cell projection"/>
    <property type="evidence" value="ECO:0007669"/>
    <property type="project" value="UniProtKB-SubCell"/>
</dbReference>
<dbReference type="GO" id="GO:0009898">
    <property type="term" value="C:cytoplasmic side of plasma membrane"/>
    <property type="evidence" value="ECO:0000250"/>
    <property type="project" value="UniProtKB"/>
</dbReference>
<dbReference type="GO" id="GO:0005829">
    <property type="term" value="C:cytosol"/>
    <property type="evidence" value="ECO:0000304"/>
    <property type="project" value="Reactome"/>
</dbReference>
<dbReference type="GO" id="GO:0005925">
    <property type="term" value="C:focal adhesion"/>
    <property type="evidence" value="ECO:0007669"/>
    <property type="project" value="UniProtKB-SubCell"/>
</dbReference>
<dbReference type="GO" id="GO:0005794">
    <property type="term" value="C:Golgi apparatus"/>
    <property type="evidence" value="ECO:0007669"/>
    <property type="project" value="UniProtKB-SubCell"/>
</dbReference>
<dbReference type="GO" id="GO:0005764">
    <property type="term" value="C:lysosome"/>
    <property type="evidence" value="ECO:0000250"/>
    <property type="project" value="UniProtKB"/>
</dbReference>
<dbReference type="GO" id="GO:0005634">
    <property type="term" value="C:nucleus"/>
    <property type="evidence" value="ECO:0007669"/>
    <property type="project" value="UniProtKB-SubCell"/>
</dbReference>
<dbReference type="GO" id="GO:0030133">
    <property type="term" value="C:transport vesicle"/>
    <property type="evidence" value="ECO:0007669"/>
    <property type="project" value="UniProtKB-SubCell"/>
</dbReference>
<dbReference type="GO" id="GO:0005524">
    <property type="term" value="F:ATP binding"/>
    <property type="evidence" value="ECO:0007669"/>
    <property type="project" value="UniProtKB-KW"/>
</dbReference>
<dbReference type="GO" id="GO:0004715">
    <property type="term" value="F:non-membrane spanning protein tyrosine kinase activity"/>
    <property type="evidence" value="ECO:0007669"/>
    <property type="project" value="UniProtKB-EC"/>
</dbReference>
<dbReference type="GO" id="GO:0001784">
    <property type="term" value="F:phosphotyrosine residue binding"/>
    <property type="evidence" value="ECO:0007669"/>
    <property type="project" value="Ensembl"/>
</dbReference>
<dbReference type="GO" id="GO:0004713">
    <property type="term" value="F:protein tyrosine kinase activity"/>
    <property type="evidence" value="ECO:0000250"/>
    <property type="project" value="UniProtKB"/>
</dbReference>
<dbReference type="GO" id="GO:0050830">
    <property type="term" value="P:defense response to Gram-positive bacterium"/>
    <property type="evidence" value="ECO:0000316"/>
    <property type="project" value="MGI"/>
</dbReference>
<dbReference type="GO" id="GO:0006887">
    <property type="term" value="P:exocytosis"/>
    <property type="evidence" value="ECO:0007669"/>
    <property type="project" value="UniProtKB-KW"/>
</dbReference>
<dbReference type="GO" id="GO:0006954">
    <property type="term" value="P:inflammatory response"/>
    <property type="evidence" value="ECO:0007669"/>
    <property type="project" value="UniProtKB-KW"/>
</dbReference>
<dbReference type="GO" id="GO:0045087">
    <property type="term" value="P:innate immune response"/>
    <property type="evidence" value="ECO:0007669"/>
    <property type="project" value="UniProtKB-KW"/>
</dbReference>
<dbReference type="GO" id="GO:0035556">
    <property type="term" value="P:intracellular signal transduction"/>
    <property type="evidence" value="ECO:0007669"/>
    <property type="project" value="Ensembl"/>
</dbReference>
<dbReference type="GO" id="GO:0043066">
    <property type="term" value="P:negative regulation of apoptotic process"/>
    <property type="evidence" value="ECO:0007669"/>
    <property type="project" value="Ensembl"/>
</dbReference>
<dbReference type="GO" id="GO:0018108">
    <property type="term" value="P:peptidyl-tyrosine phosphorylation"/>
    <property type="evidence" value="ECO:0000250"/>
    <property type="project" value="UniProtKB"/>
</dbReference>
<dbReference type="GO" id="GO:0006909">
    <property type="term" value="P:phagocytosis"/>
    <property type="evidence" value="ECO:0000315"/>
    <property type="project" value="MGI"/>
</dbReference>
<dbReference type="GO" id="GO:0008284">
    <property type="term" value="P:positive regulation of cell population proliferation"/>
    <property type="evidence" value="ECO:0000250"/>
    <property type="project" value="UniProtKB"/>
</dbReference>
<dbReference type="GO" id="GO:0046777">
    <property type="term" value="P:protein autophosphorylation"/>
    <property type="evidence" value="ECO:0000250"/>
    <property type="project" value="UniProtKB"/>
</dbReference>
<dbReference type="GO" id="GO:0032956">
    <property type="term" value="P:regulation of actin cytoskeleton organization"/>
    <property type="evidence" value="ECO:0000250"/>
    <property type="project" value="UniProtKB"/>
</dbReference>
<dbReference type="GO" id="GO:0008360">
    <property type="term" value="P:regulation of cell shape"/>
    <property type="evidence" value="ECO:0000250"/>
    <property type="project" value="UniProtKB"/>
</dbReference>
<dbReference type="GO" id="GO:0050764">
    <property type="term" value="P:regulation of phagocytosis"/>
    <property type="evidence" value="ECO:0000250"/>
    <property type="project" value="UniProtKB"/>
</dbReference>
<dbReference type="GO" id="GO:0071801">
    <property type="term" value="P:regulation of podosome assembly"/>
    <property type="evidence" value="ECO:0000250"/>
    <property type="project" value="UniProtKB"/>
</dbReference>
<dbReference type="CDD" id="cd10363">
    <property type="entry name" value="SH2_Src_HCK"/>
    <property type="match status" value="1"/>
</dbReference>
<dbReference type="FunFam" id="1.10.510.10:FF:000553">
    <property type="entry name" value="Tyrosine-protein kinase"/>
    <property type="match status" value="1"/>
</dbReference>
<dbReference type="FunFam" id="2.30.30.40:FF:000095">
    <property type="entry name" value="Tyrosine-protein kinase"/>
    <property type="match status" value="1"/>
</dbReference>
<dbReference type="FunFam" id="3.30.200.20:FF:000036">
    <property type="entry name" value="Tyrosine-protein kinase"/>
    <property type="match status" value="1"/>
</dbReference>
<dbReference type="FunFam" id="3.30.505.10:FF:000010">
    <property type="entry name" value="Tyrosine-protein kinase"/>
    <property type="match status" value="1"/>
</dbReference>
<dbReference type="Gene3D" id="3.30.200.20">
    <property type="entry name" value="Phosphorylase Kinase, domain 1"/>
    <property type="match status" value="1"/>
</dbReference>
<dbReference type="Gene3D" id="3.30.505.10">
    <property type="entry name" value="SH2 domain"/>
    <property type="match status" value="1"/>
</dbReference>
<dbReference type="Gene3D" id="2.30.30.40">
    <property type="entry name" value="SH3 Domains"/>
    <property type="match status" value="1"/>
</dbReference>
<dbReference type="Gene3D" id="1.10.510.10">
    <property type="entry name" value="Transferase(Phosphotransferase) domain 1"/>
    <property type="match status" value="1"/>
</dbReference>
<dbReference type="InterPro" id="IPR035851">
    <property type="entry name" value="HCK_SH2"/>
</dbReference>
<dbReference type="InterPro" id="IPR011009">
    <property type="entry name" value="Kinase-like_dom_sf"/>
</dbReference>
<dbReference type="InterPro" id="IPR050198">
    <property type="entry name" value="Non-receptor_tyrosine_kinases"/>
</dbReference>
<dbReference type="InterPro" id="IPR000719">
    <property type="entry name" value="Prot_kinase_dom"/>
</dbReference>
<dbReference type="InterPro" id="IPR017441">
    <property type="entry name" value="Protein_kinase_ATP_BS"/>
</dbReference>
<dbReference type="InterPro" id="IPR001245">
    <property type="entry name" value="Ser-Thr/Tyr_kinase_cat_dom"/>
</dbReference>
<dbReference type="InterPro" id="IPR000980">
    <property type="entry name" value="SH2"/>
</dbReference>
<dbReference type="InterPro" id="IPR036860">
    <property type="entry name" value="SH2_dom_sf"/>
</dbReference>
<dbReference type="InterPro" id="IPR036028">
    <property type="entry name" value="SH3-like_dom_sf"/>
</dbReference>
<dbReference type="InterPro" id="IPR001452">
    <property type="entry name" value="SH3_domain"/>
</dbReference>
<dbReference type="InterPro" id="IPR008266">
    <property type="entry name" value="Tyr_kinase_AS"/>
</dbReference>
<dbReference type="InterPro" id="IPR020635">
    <property type="entry name" value="Tyr_kinase_cat_dom"/>
</dbReference>
<dbReference type="PANTHER" id="PTHR24418">
    <property type="entry name" value="TYROSINE-PROTEIN KINASE"/>
    <property type="match status" value="1"/>
</dbReference>
<dbReference type="Pfam" id="PF07714">
    <property type="entry name" value="PK_Tyr_Ser-Thr"/>
    <property type="match status" value="1"/>
</dbReference>
<dbReference type="Pfam" id="PF00017">
    <property type="entry name" value="SH2"/>
    <property type="match status" value="1"/>
</dbReference>
<dbReference type="Pfam" id="PF00018">
    <property type="entry name" value="SH3_1"/>
    <property type="match status" value="1"/>
</dbReference>
<dbReference type="PRINTS" id="PR00401">
    <property type="entry name" value="SH2DOMAIN"/>
</dbReference>
<dbReference type="PRINTS" id="PR00452">
    <property type="entry name" value="SH3DOMAIN"/>
</dbReference>
<dbReference type="PRINTS" id="PR00109">
    <property type="entry name" value="TYRKINASE"/>
</dbReference>
<dbReference type="SMART" id="SM00252">
    <property type="entry name" value="SH2"/>
    <property type="match status" value="1"/>
</dbReference>
<dbReference type="SMART" id="SM00326">
    <property type="entry name" value="SH3"/>
    <property type="match status" value="1"/>
</dbReference>
<dbReference type="SMART" id="SM00219">
    <property type="entry name" value="TyrKc"/>
    <property type="match status" value="1"/>
</dbReference>
<dbReference type="SUPFAM" id="SSF56112">
    <property type="entry name" value="Protein kinase-like (PK-like)"/>
    <property type="match status" value="1"/>
</dbReference>
<dbReference type="SUPFAM" id="SSF55550">
    <property type="entry name" value="SH2 domain"/>
    <property type="match status" value="1"/>
</dbReference>
<dbReference type="SUPFAM" id="SSF50044">
    <property type="entry name" value="SH3-domain"/>
    <property type="match status" value="1"/>
</dbReference>
<dbReference type="PROSITE" id="PS00107">
    <property type="entry name" value="PROTEIN_KINASE_ATP"/>
    <property type="match status" value="1"/>
</dbReference>
<dbReference type="PROSITE" id="PS50011">
    <property type="entry name" value="PROTEIN_KINASE_DOM"/>
    <property type="match status" value="1"/>
</dbReference>
<dbReference type="PROSITE" id="PS00109">
    <property type="entry name" value="PROTEIN_KINASE_TYR"/>
    <property type="match status" value="1"/>
</dbReference>
<dbReference type="PROSITE" id="PS50001">
    <property type="entry name" value="SH2"/>
    <property type="match status" value="1"/>
</dbReference>
<dbReference type="PROSITE" id="PS50002">
    <property type="entry name" value="SH3"/>
    <property type="match status" value="1"/>
</dbReference>
<accession>P08103</accession>
<accession>Q0VH03</accession>
<accession>Q3UD17</accession>
<name>HCK_MOUSE</name>
<comment type="function">
    <text evidence="1 8 9 11 12 14 15 16 17 18 19 20 22 23">Non-receptor tyrosine-protein kinase found in hematopoietic cells that transmits signals from cell surface receptors and plays an important role in the regulation of innate immune responses, including neutrophil, monocyte, macrophage and mast cell functions, phagocytosis, cell survival and proliferation, cell adhesion and migration. Acts downstream of receptors that bind the Fc region of immunoglobulins, such as FCGR1A and FCGR2A, but also CSF3R, PLAUR, the receptors for IFNG, IL2, IL6 and IL8, and integrins, such as ITGB1 and ITGB2. During the phagocytic process, mediates mobilization of secretory lysosomes, degranulation, and activation of NADPH oxidase to bring about the respiratory burst. Plays a role in the release of inflammatory molecules. Promotes reorganization of the actin cytoskeleton and actin polymerization, formation of podosomes and cell protrusions. Inhibits TP73-mediated transcription activation and TP73-mediated apoptosis. Phosphorylates CBL in response to activation of immunoglobulin gamma Fc region receptors. Phosphorylates ADAM15, BCR, ELMO1, FCGR2A, GAB1, GAB2, RAPGEF1, STAT5B, TP73, VAV1 and WAS (By similarity).</text>
</comment>
<comment type="catalytic activity">
    <reaction evidence="6 23">
        <text>L-tyrosyl-[protein] + ATP = O-phospho-L-tyrosyl-[protein] + ADP + H(+)</text>
        <dbReference type="Rhea" id="RHEA:10596"/>
        <dbReference type="Rhea" id="RHEA-COMP:10136"/>
        <dbReference type="Rhea" id="RHEA-COMP:20101"/>
        <dbReference type="ChEBI" id="CHEBI:15378"/>
        <dbReference type="ChEBI" id="CHEBI:30616"/>
        <dbReference type="ChEBI" id="CHEBI:46858"/>
        <dbReference type="ChEBI" id="CHEBI:61978"/>
        <dbReference type="ChEBI" id="CHEBI:456216"/>
        <dbReference type="EC" id="2.7.10.2"/>
    </reaction>
</comment>
<comment type="activity regulation">
    <text evidence="10 23">Subject to autoinhibition, mediated by intramolecular interactions involving the SH2 and SH3 domains. Kinase activity is also regulated by phosphorylation at regulatory tyrosine residues. Phosphorylation at Tyr-409 is required for optimal activity. Phosphorylation at Tyr-520 inhibits kinase activity. Inhibited by PP1.</text>
</comment>
<comment type="subunit">
    <text evidence="1 2 9 11 12 13 19 22">Interacts with ADAM15. Interacts with FASLG. Interacts with ARRB1 and ARRB2. Interacts with FCGR1A; the interaction may be indirect. Interacts with IL6ST. Interacts (via SH3 domain) with ELMO1. Interacts (via SH3 domain) with TP73. Interacts with YAP1. Interacts with ABL1 and ITGB1, and thereby recruits ABL1 to activated ITGB1 (By similarity). Interacts (via SH2 domain) with FLT3 (tyrosine phosphorylated). Interacts with CBL. Interacts with VAV1, WAS and RAPGEF1. Interacts (via SH3 domain) with WDCP (By similarity).</text>
</comment>
<comment type="interaction">
    <interactant intactId="EBI-6248894">
        <id>P08103</id>
    </interactant>
    <interactant intactId="EBI-346375">
        <id>P42768</id>
        <label>WAS</label>
    </interactant>
    <organismsDiffer>true</organismsDiffer>
    <experiments>3</experiments>
</comment>
<comment type="subcellular location">
    <subcellularLocation>
        <location evidence="1">Cytoplasmic vesicle</location>
        <location evidence="1">Secretory vesicle</location>
    </subcellularLocation>
    <subcellularLocation>
        <location evidence="1">Cytoplasm</location>
        <location evidence="1">Cytosol</location>
    </subcellularLocation>
</comment>
<comment type="subcellular location">
    <molecule>Isoform 1</molecule>
    <subcellularLocation>
        <location>Membrane</location>
        <topology>Lipid-anchor</topology>
    </subcellularLocation>
    <subcellularLocation>
        <location evidence="1">Membrane</location>
        <location evidence="1">Caveola</location>
    </subcellularLocation>
    <subcellularLocation>
        <location evidence="1">Lysosome</location>
    </subcellularLocation>
    <subcellularLocation>
        <location evidence="1">Cell projection</location>
        <location evidence="1">Podosome membrane</location>
        <topology evidence="1">Lipid-anchor</topology>
    </subcellularLocation>
    <subcellularLocation>
        <location evidence="1">Cytoplasm</location>
        <location evidence="1">Cytosol</location>
    </subcellularLocation>
    <text evidence="1">Associated with specialized secretory lysosomes called azurophil granules. A fraction of this isoform is found in the cytoplasm, some of this fraction is myristoylated (By similarity).</text>
</comment>
<comment type="subcellular location">
    <molecule>Isoform 2</molecule>
    <subcellularLocation>
        <location>Cell membrane</location>
        <topology>Lipid-anchor</topology>
    </subcellularLocation>
    <subcellularLocation>
        <location evidence="1">Membrane</location>
        <location evidence="1">Caveola</location>
        <topology evidence="1">Lipid-anchor</topology>
    </subcellularLocation>
    <subcellularLocation>
        <location evidence="1">Cell junction</location>
        <location evidence="1">Focal adhesion</location>
    </subcellularLocation>
    <subcellularLocation>
        <location evidence="1">Cytoplasm</location>
        <location evidence="1">Cytoskeleton</location>
    </subcellularLocation>
    <subcellularLocation>
        <location evidence="1">Golgi apparatus</location>
    </subcellularLocation>
    <subcellularLocation>
        <location evidence="1">Cytoplasmic vesicle</location>
    </subcellularLocation>
    <subcellularLocation>
        <location evidence="1">Lysosome</location>
    </subcellularLocation>
    <subcellularLocation>
        <location evidence="1">Nucleus</location>
    </subcellularLocation>
    <text evidence="1">20% of this isoform is associated with caveolae. Localization at the cell membrane and at caveolae requires palmitoylation at Cys-3. Colocalizes with the actin cytoskeleton at focal adhesions (By similarity).</text>
</comment>
<comment type="alternative products">
    <event type="alternative initiation"/>
    <isoform>
        <id>P08103-1</id>
        <name>1</name>
        <name>p59-HCK</name>
        <sequence type="displayed"/>
    </isoform>
    <isoform>
        <id>P08103-2</id>
        <name>2</name>
        <name>p56-HCK</name>
        <sequence type="described" ref="VSP_018859"/>
    </isoform>
</comment>
<comment type="tissue specificity">
    <text>Expressed predominantly in cells of the myeloid and B-lymphoid lineages.</text>
</comment>
<comment type="PTM">
    <text evidence="10">Phosphorylated on several tyrosine residues. Autophosphorylated. Becomes rapidly phosphorylated upon activation of the immunoglobulin receptors FCGR1A and FCGR2A. Phosphorylation at Tyr-409 increases kinase activity. Phosphorylation at Tyr-520 inhibits kinase activity. Kinase activity is not required for phosphorylation at Tyr-520, suggesting that this site may be a target of other kinases.</text>
</comment>
<comment type="PTM">
    <text>Ubiquitinated by CBL, leading to its degradation via the proteasome.</text>
</comment>
<comment type="PTM">
    <text evidence="2">Isoform 2 palmitoylation at position 2 requires prior myristoylation. Palmitoylation at position 3 is required for caveolar localization of isoform 2.</text>
</comment>
<comment type="disruption phenotype">
    <text evidence="20 21">No visible phenotype, but macrophages have impaired phagocytosis. Mice lacking both HCK and FGR are extremely sensitive to infections by L.monocytogenes.</text>
</comment>
<comment type="miscellaneous">
    <molecule>Isoform 1</molecule>
    <text>Initiates from a CTG codon.</text>
</comment>
<comment type="similarity">
    <text evidence="3">Belongs to the protein kinase superfamily. Tyr protein kinase family. SRC subfamily.</text>
</comment>
<comment type="sequence caution" evidence="24">
    <conflict type="miscellaneous discrepancy">
        <sequence resource="EMBL-CDS" id="AAA37305"/>
    </conflict>
    <text>Unusual initiator. The initiator methionine is coded by a non-canonical CTG leucine codon.</text>
</comment>
<comment type="sequence caution" evidence="24">
    <conflict type="miscellaneous discrepancy">
        <sequence resource="EMBL-CDS" id="BAE29054"/>
    </conflict>
    <text>Unusual initiator. The initiator methionine is coded by a non-canonical CTG leucine codon.</text>
</comment>
<comment type="sequence caution" evidence="24">
    <conflict type="miscellaneous discrepancy">
        <sequence resource="EMBL-CDS" id="BAE29445"/>
    </conflict>
    <text>Unusual initiator. The initiator methionine is coded by a non-canonical CTG leucine codon.</text>
</comment>
<comment type="sequence caution" evidence="24">
    <conflict type="miscellaneous discrepancy">
        <sequence resource="EMBL-CDS" id="BAE29787"/>
    </conflict>
    <text>Unusual initiator. The initiator methionine is coded by a non-canonical CTG leucine codon.</text>
</comment>
<comment type="sequence caution" evidence="24">
    <conflict type="miscellaneous discrepancy">
        <sequence resource="EMBL-CDS" id="BAE33532"/>
    </conflict>
    <text>Unusual initiator. The initiator methionine is coded by a non-canonical CTG leucine codon.</text>
</comment>
<comment type="sequence caution" evidence="24">
    <conflict type="miscellaneous discrepancy">
        <sequence resource="EMBL-CDS" id="BAE38133"/>
    </conflict>
    <text>Unusual initiator. The initiator methionine is coded by a non-canonical CTG leucine codon.</text>
</comment>
<comment type="sequence caution" evidence="24">
    <conflict type="miscellaneous discrepancy">
        <sequence resource="EMBL-CDS" id="CAA68544"/>
    </conflict>
    <text>Unusual initiator. The initiator methionine is coded by a non-canonical CTG leucine codon.</text>
</comment>
<sequence>MGGRSSCEDPGCPRSEGRAPRMGCVKSRFLRDGSKASKTEPSANQKGPVYVPDPTSSSKLGPNNSNSMPPGFVEGSEDTIVVALYDYEAIHREDLSFQKGDQMVVLEEAGEWWKARSLATKKEGYIPSNYVARVNSLETEEWFFKGISRKDAERHLLAPGNMLGSFMIRDSETTKGSYSLSVRDFDPQHGDTVKHYKIRTLDSGGFYISPRSTFSSLQELVLHYKKGKDGLCQKLSVPCVSPKPQKPWEKDAWEIPRESLQMEKKLGAGQFGEVWMATYNKHTKVAVKTMKPGSMSVEAFLAEANLMKSLQHDKLVKLHAVVSQEPIFIVTEFMAKGSLLDFLKSEEGSKQPLPKLIDFSAQISEGMAFIEQRNYIHRDLRAANILVSASLVCKIADFGLARIIEDNEYTAREGAKFPIKWTAPEAINFGSFTIKSDVWSFGILLMEIVTYGRIPYPGMSNPEVIRALEHGYRMPRPDNCPEELYNIMIRCWKNRPEERPTFEYIQSVLDDFYTATESQYQQQP</sequence>
<feature type="initiator methionine" description="Removed" evidence="2">
    <location>
        <position position="1"/>
    </location>
</feature>
<feature type="chain" id="PRO_0000024435" description="Tyrosine-protein kinase HCK">
    <location>
        <begin position="2"/>
        <end position="524"/>
    </location>
</feature>
<feature type="domain" description="SH3" evidence="5">
    <location>
        <begin position="76"/>
        <end position="136"/>
    </location>
</feature>
<feature type="domain" description="SH2" evidence="4">
    <location>
        <begin position="142"/>
        <end position="239"/>
    </location>
</feature>
<feature type="domain" description="Protein kinase" evidence="3">
    <location>
        <begin position="260"/>
        <end position="513"/>
    </location>
</feature>
<feature type="region of interest" description="Disordered" evidence="7">
    <location>
        <begin position="1"/>
        <end position="72"/>
    </location>
</feature>
<feature type="compositionally biased region" description="Basic and acidic residues" evidence="7">
    <location>
        <begin position="29"/>
        <end position="38"/>
    </location>
</feature>
<feature type="compositionally biased region" description="Polar residues" evidence="7">
    <location>
        <begin position="54"/>
        <end position="68"/>
    </location>
</feature>
<feature type="active site" description="Proton acceptor" evidence="3 6">
    <location>
        <position position="379"/>
    </location>
</feature>
<feature type="binding site" evidence="3">
    <location>
        <begin position="266"/>
        <end position="274"/>
    </location>
    <ligand>
        <name>ATP</name>
        <dbReference type="ChEBI" id="CHEBI:30616"/>
    </ligand>
</feature>
<feature type="binding site" evidence="3">
    <location>
        <position position="288"/>
    </location>
    <ligand>
        <name>ATP</name>
        <dbReference type="ChEBI" id="CHEBI:30616"/>
    </ligand>
</feature>
<feature type="modified residue" description="Phosphotyrosine; by autocatalysis" evidence="10">
    <location>
        <position position="50"/>
    </location>
</feature>
<feature type="modified residue" description="Phosphothreonine" evidence="2">
    <location>
        <position position="200"/>
    </location>
</feature>
<feature type="modified residue" description="Phosphotyrosine" evidence="25">
    <location>
        <position position="207"/>
    </location>
</feature>
<feature type="modified residue" description="Phosphotyrosine; by autocatalysis" evidence="10">
    <location>
        <position position="409"/>
    </location>
</feature>
<feature type="modified residue" description="Phosphoserine" evidence="2">
    <location>
        <position position="460"/>
    </location>
</feature>
<feature type="modified residue" description="Phosphotyrosine" evidence="25">
    <location>
        <position position="520"/>
    </location>
</feature>
<feature type="lipid moiety-binding region" description="N-myristoyl glycine" evidence="1">
    <location>
        <position position="2"/>
    </location>
</feature>
<feature type="splice variant" id="VSP_018859" description="In isoform 2." evidence="24">
    <location>
        <begin position="1"/>
        <end position="21"/>
    </location>
</feature>
<feature type="mutagenesis site" description="Reduced autophosphorylation." evidence="10">
    <original>Y</original>
    <variation>F</variation>
    <location>
        <position position="409"/>
    </location>
</feature>
<feature type="initiator methionine" description="Removed" evidence="24">
    <location sequence="P08103-2">
        <position position="1"/>
    </location>
</feature>
<feature type="lipid moiety-binding region" description="N-myristoyl glycine" evidence="2">
    <location sequence="P08103-2">
        <position position="2"/>
    </location>
</feature>
<feature type="lipid moiety-binding region" description="S-palmitoyl cysteine" evidence="2">
    <location sequence="P08103-2">
        <position position="3"/>
    </location>
</feature>
<gene>
    <name type="primary">Hck</name>
</gene>
<evidence type="ECO:0000250" key="1"/>
<evidence type="ECO:0000250" key="2">
    <source>
        <dbReference type="UniProtKB" id="P08631"/>
    </source>
</evidence>
<evidence type="ECO:0000255" key="3">
    <source>
        <dbReference type="PROSITE-ProRule" id="PRU00159"/>
    </source>
</evidence>
<evidence type="ECO:0000255" key="4">
    <source>
        <dbReference type="PROSITE-ProRule" id="PRU00191"/>
    </source>
</evidence>
<evidence type="ECO:0000255" key="5">
    <source>
        <dbReference type="PROSITE-ProRule" id="PRU00192"/>
    </source>
</evidence>
<evidence type="ECO:0000255" key="6">
    <source>
        <dbReference type="PROSITE-ProRule" id="PRU10028"/>
    </source>
</evidence>
<evidence type="ECO:0000256" key="7">
    <source>
        <dbReference type="SAM" id="MobiDB-lite"/>
    </source>
</evidence>
<evidence type="ECO:0000269" key="8">
    <source>
    </source>
</evidence>
<evidence type="ECO:0000269" key="9">
    <source>
    </source>
</evidence>
<evidence type="ECO:0000269" key="10">
    <source>
    </source>
</evidence>
<evidence type="ECO:0000269" key="11">
    <source>
    </source>
</evidence>
<evidence type="ECO:0000269" key="12">
    <source>
    </source>
</evidence>
<evidence type="ECO:0000269" key="13">
    <source>
    </source>
</evidence>
<evidence type="ECO:0000269" key="14">
    <source>
    </source>
</evidence>
<evidence type="ECO:0000269" key="15">
    <source>
    </source>
</evidence>
<evidence type="ECO:0000269" key="16">
    <source>
    </source>
</evidence>
<evidence type="ECO:0000269" key="17">
    <source>
    </source>
</evidence>
<evidence type="ECO:0000269" key="18">
    <source>
    </source>
</evidence>
<evidence type="ECO:0000269" key="19">
    <source>
    </source>
</evidence>
<evidence type="ECO:0000269" key="20">
    <source>
    </source>
</evidence>
<evidence type="ECO:0000269" key="21">
    <source>
    </source>
</evidence>
<evidence type="ECO:0000269" key="22">
    <source>
    </source>
</evidence>
<evidence type="ECO:0000269" key="23">
    <source>
    </source>
</evidence>
<evidence type="ECO:0000305" key="24"/>
<evidence type="ECO:0007744" key="25">
    <source>
    </source>
</evidence>
<protein>
    <recommendedName>
        <fullName>Tyrosine-protein kinase HCK</fullName>
        <ecNumber>2.7.10.2</ecNumber>
    </recommendedName>
    <alternativeName>
        <fullName>B-cell/myeloid kinase</fullName>
        <shortName>BMK</shortName>
    </alternativeName>
    <alternativeName>
        <fullName>Hematopoietic cell kinase</fullName>
    </alternativeName>
    <alternativeName>
        <fullName>Hemopoietic cell kinase</fullName>
    </alternativeName>
    <alternativeName>
        <fullName>p56-HCK/p59-HCK</fullName>
    </alternativeName>
</protein>
<reference key="1">
    <citation type="journal article" date="1987" name="Nucleic Acids Res.">
        <title>Nucleotide sequence of the mouse hck gene.</title>
        <authorList>
            <person name="Klemsz M.J."/>
            <person name="McKercher S.R."/>
            <person name="Maki R.A."/>
        </authorList>
    </citation>
    <scope>NUCLEOTIDE SEQUENCE [MRNA] (ISOFORM 1)</scope>
    <source>
        <strain>ICR</strain>
        <tissue>Macrophage</tissue>
    </source>
</reference>
<reference key="2">
    <citation type="journal article" date="1987" name="Proc. Natl. Acad. Sci. U.S.A.">
        <title>Isolation and sequence of a cDNA corresponding to a src-related gene expressed in murine hemopoietic cells.</title>
        <authorList>
            <person name="Holtzman D.A."/>
            <person name="Cook W.D."/>
            <person name="Dunn A.R."/>
        </authorList>
    </citation>
    <scope>NUCLEOTIDE SEQUENCE [MRNA] (ISOFORM 1)</scope>
    <source>
        <tissue>Macrophage</tissue>
    </source>
</reference>
<reference key="3">
    <citation type="journal article" date="2005" name="Science">
        <title>The transcriptional landscape of the mammalian genome.</title>
        <authorList>
            <person name="Carninci P."/>
            <person name="Kasukawa T."/>
            <person name="Katayama S."/>
            <person name="Gough J."/>
            <person name="Frith M.C."/>
            <person name="Maeda N."/>
            <person name="Oyama R."/>
            <person name="Ravasi T."/>
            <person name="Lenhard B."/>
            <person name="Wells C."/>
            <person name="Kodzius R."/>
            <person name="Shimokawa K."/>
            <person name="Bajic V.B."/>
            <person name="Brenner S.E."/>
            <person name="Batalov S."/>
            <person name="Forrest A.R."/>
            <person name="Zavolan M."/>
            <person name="Davis M.J."/>
            <person name="Wilming L.G."/>
            <person name="Aidinis V."/>
            <person name="Allen J.E."/>
            <person name="Ambesi-Impiombato A."/>
            <person name="Apweiler R."/>
            <person name="Aturaliya R.N."/>
            <person name="Bailey T.L."/>
            <person name="Bansal M."/>
            <person name="Baxter L."/>
            <person name="Beisel K.W."/>
            <person name="Bersano T."/>
            <person name="Bono H."/>
            <person name="Chalk A.M."/>
            <person name="Chiu K.P."/>
            <person name="Choudhary V."/>
            <person name="Christoffels A."/>
            <person name="Clutterbuck D.R."/>
            <person name="Crowe M.L."/>
            <person name="Dalla E."/>
            <person name="Dalrymple B.P."/>
            <person name="de Bono B."/>
            <person name="Della Gatta G."/>
            <person name="di Bernardo D."/>
            <person name="Down T."/>
            <person name="Engstrom P."/>
            <person name="Fagiolini M."/>
            <person name="Faulkner G."/>
            <person name="Fletcher C.F."/>
            <person name="Fukushima T."/>
            <person name="Furuno M."/>
            <person name="Futaki S."/>
            <person name="Gariboldi M."/>
            <person name="Georgii-Hemming P."/>
            <person name="Gingeras T.R."/>
            <person name="Gojobori T."/>
            <person name="Green R.E."/>
            <person name="Gustincich S."/>
            <person name="Harbers M."/>
            <person name="Hayashi Y."/>
            <person name="Hensch T.K."/>
            <person name="Hirokawa N."/>
            <person name="Hill D."/>
            <person name="Huminiecki L."/>
            <person name="Iacono M."/>
            <person name="Ikeo K."/>
            <person name="Iwama A."/>
            <person name="Ishikawa T."/>
            <person name="Jakt M."/>
            <person name="Kanapin A."/>
            <person name="Katoh M."/>
            <person name="Kawasawa Y."/>
            <person name="Kelso J."/>
            <person name="Kitamura H."/>
            <person name="Kitano H."/>
            <person name="Kollias G."/>
            <person name="Krishnan S.P."/>
            <person name="Kruger A."/>
            <person name="Kummerfeld S.K."/>
            <person name="Kurochkin I.V."/>
            <person name="Lareau L.F."/>
            <person name="Lazarevic D."/>
            <person name="Lipovich L."/>
            <person name="Liu J."/>
            <person name="Liuni S."/>
            <person name="McWilliam S."/>
            <person name="Madan Babu M."/>
            <person name="Madera M."/>
            <person name="Marchionni L."/>
            <person name="Matsuda H."/>
            <person name="Matsuzawa S."/>
            <person name="Miki H."/>
            <person name="Mignone F."/>
            <person name="Miyake S."/>
            <person name="Morris K."/>
            <person name="Mottagui-Tabar S."/>
            <person name="Mulder N."/>
            <person name="Nakano N."/>
            <person name="Nakauchi H."/>
            <person name="Ng P."/>
            <person name="Nilsson R."/>
            <person name="Nishiguchi S."/>
            <person name="Nishikawa S."/>
            <person name="Nori F."/>
            <person name="Ohara O."/>
            <person name="Okazaki Y."/>
            <person name="Orlando V."/>
            <person name="Pang K.C."/>
            <person name="Pavan W.J."/>
            <person name="Pavesi G."/>
            <person name="Pesole G."/>
            <person name="Petrovsky N."/>
            <person name="Piazza S."/>
            <person name="Reed J."/>
            <person name="Reid J.F."/>
            <person name="Ring B.Z."/>
            <person name="Ringwald M."/>
            <person name="Rost B."/>
            <person name="Ruan Y."/>
            <person name="Salzberg S.L."/>
            <person name="Sandelin A."/>
            <person name="Schneider C."/>
            <person name="Schoenbach C."/>
            <person name="Sekiguchi K."/>
            <person name="Semple C.A."/>
            <person name="Seno S."/>
            <person name="Sessa L."/>
            <person name="Sheng Y."/>
            <person name="Shibata Y."/>
            <person name="Shimada H."/>
            <person name="Shimada K."/>
            <person name="Silva D."/>
            <person name="Sinclair B."/>
            <person name="Sperling S."/>
            <person name="Stupka E."/>
            <person name="Sugiura K."/>
            <person name="Sultana R."/>
            <person name="Takenaka Y."/>
            <person name="Taki K."/>
            <person name="Tammoja K."/>
            <person name="Tan S.L."/>
            <person name="Tang S."/>
            <person name="Taylor M.S."/>
            <person name="Tegner J."/>
            <person name="Teichmann S.A."/>
            <person name="Ueda H.R."/>
            <person name="van Nimwegen E."/>
            <person name="Verardo R."/>
            <person name="Wei C.L."/>
            <person name="Yagi K."/>
            <person name="Yamanishi H."/>
            <person name="Zabarovsky E."/>
            <person name="Zhu S."/>
            <person name="Zimmer A."/>
            <person name="Hide W."/>
            <person name="Bult C."/>
            <person name="Grimmond S.M."/>
            <person name="Teasdale R.D."/>
            <person name="Liu E.T."/>
            <person name="Brusic V."/>
            <person name="Quackenbush J."/>
            <person name="Wahlestedt C."/>
            <person name="Mattick J.S."/>
            <person name="Hume D.A."/>
            <person name="Kai C."/>
            <person name="Sasaki D."/>
            <person name="Tomaru Y."/>
            <person name="Fukuda S."/>
            <person name="Kanamori-Katayama M."/>
            <person name="Suzuki M."/>
            <person name="Aoki J."/>
            <person name="Arakawa T."/>
            <person name="Iida J."/>
            <person name="Imamura K."/>
            <person name="Itoh M."/>
            <person name="Kato T."/>
            <person name="Kawaji H."/>
            <person name="Kawagashira N."/>
            <person name="Kawashima T."/>
            <person name="Kojima M."/>
            <person name="Kondo S."/>
            <person name="Konno H."/>
            <person name="Nakano K."/>
            <person name="Ninomiya N."/>
            <person name="Nishio T."/>
            <person name="Okada M."/>
            <person name="Plessy C."/>
            <person name="Shibata K."/>
            <person name="Shiraki T."/>
            <person name="Suzuki S."/>
            <person name="Tagami M."/>
            <person name="Waki K."/>
            <person name="Watahiki A."/>
            <person name="Okamura-Oho Y."/>
            <person name="Suzuki H."/>
            <person name="Kawai J."/>
            <person name="Hayashizaki Y."/>
        </authorList>
    </citation>
    <scope>NUCLEOTIDE SEQUENCE [LARGE SCALE MRNA] (ISOFORM 1)</scope>
    <source>
        <strain>C57BL/6J</strain>
        <strain>NOD</strain>
        <tissue>Bone marrow macrophage</tissue>
        <tissue>Spleen</tissue>
    </source>
</reference>
<reference key="4">
    <citation type="journal article" date="2004" name="Genome Res.">
        <title>The status, quality, and expansion of the NIH full-length cDNA project: the Mammalian Gene Collection (MGC).</title>
        <authorList>
            <consortium name="The MGC Project Team"/>
        </authorList>
    </citation>
    <scope>NUCLEOTIDE SEQUENCE [LARGE SCALE MRNA] (ISOFORM 1)</scope>
    <source>
        <strain>FVB/N</strain>
        <tissue>Mammary gland</tissue>
    </source>
</reference>
<reference key="5">
    <citation type="journal article" date="1991" name="Mol. Cell. Biol.">
        <title>Two isoforms of murine hck, generated by utilization of alternative translational initiation codons, exhibit different patterns of subcellular localization.</title>
        <authorList>
            <person name="Lock P."/>
            <person name="Ralph S."/>
            <person name="Stanley E."/>
            <person name="Boulet I."/>
            <person name="Ramsay R."/>
            <person name="Dunn A.R."/>
        </authorList>
    </citation>
    <scope>NUCLEOTIDE SEQUENCE [MRNA] OF 1-21 (ISOFORM 1)</scope>
    <scope>SUBCELLULAR LOCATION</scope>
    <scope>IDENTIFICATION OF ISOFORM 2</scope>
    <scope>ALTERNATIVE INITIATION</scope>
</reference>
<reference key="6">
    <citation type="journal article" date="1994" name="Genes Dev.">
        <title>Functional overlap in the src gene family: inactivation of hck and fgr impairs natural immunity.</title>
        <authorList>
            <person name="Lowell C.A."/>
            <person name="Soriano P."/>
            <person name="Varmus H.E."/>
        </authorList>
    </citation>
    <scope>DISRUPTION PHENOTYPE</scope>
    <scope>FUNCTION</scope>
</reference>
<reference key="7">
    <citation type="journal article" date="1996" name="J. Cell Biol.">
        <title>Deficiency of Src family kinases p59/61hck and p58c-fgr results in defective adhesion-dependent neutrophil functions.</title>
        <authorList>
            <person name="Lowell C.A."/>
            <person name="Fumagalli L."/>
            <person name="Berton G."/>
        </authorList>
    </citation>
    <scope>DISRUPTION PHENOTYPE</scope>
</reference>
<reference key="8">
    <citation type="journal article" date="1997" name="J. Leukoc. Biol.">
        <title>Bacterial LPS and IFN-gamma trigger the tyrosine phosphorylation of vav in macrophages: evidence for involvement of the hck tyrosine kinase.</title>
        <authorList>
            <person name="English B.K."/>
            <person name="Orlicek S.L."/>
            <person name="Mei Z."/>
            <person name="Meals E.A."/>
        </authorList>
    </citation>
    <scope>FUNCTION</scope>
    <scope>INTERACTION WITH VAV1</scope>
</reference>
<reference key="9">
    <citation type="journal article" date="1999" name="J. Cell Sci.">
        <title>Impaired integrin-mediated signal transduction, altered cytoskeletal structure and reduced motility in Hck/Fgr deficient macrophages.</title>
        <authorList>
            <person name="Suen P.W."/>
            <person name="Ilic D."/>
            <person name="Caveggion E."/>
            <person name="Berton G."/>
            <person name="Damsky C.H."/>
            <person name="Lowell C.A."/>
        </authorList>
    </citation>
    <scope>FUNCTION</scope>
</reference>
<reference key="10">
    <citation type="journal article" date="1999" name="J. Immunol.">
        <title>Adhesion-dependent degranulation of neutrophils requires the Src family kinases Fgr and Hck.</title>
        <authorList>
            <person name="Mocsai A."/>
            <person name="Ligeti E."/>
            <person name="Lowell C.A."/>
            <person name="Berton G."/>
        </authorList>
    </citation>
    <scope>FUNCTION</scope>
    <scope>CATALYTIC ACTIVITY</scope>
    <scope>ACTIVITY REGULATION</scope>
</reference>
<reference key="11">
    <citation type="journal article" date="2000" name="J. Biol. Chem.">
        <title>Hck enhances the adherence of lipopolysaccharide-stimulated macrophages via Cbl and phosphatidylinositol 3-kinase.</title>
        <authorList>
            <person name="Scholz G."/>
            <person name="Cartledge K."/>
            <person name="Dunn A.R."/>
        </authorList>
    </citation>
    <scope>FUNCTION IN PHOSPHORYLATION OF CBL</scope>
    <scope>SUBCELLULAR LOCATION</scope>
    <scope>INTERACTION WITH CBL</scope>
</reference>
<reference key="12">
    <citation type="journal article" date="2000" name="J. Biol. Chem.">
        <title>Modulation of the catalytic activity of the Src family tyrosine kinase Hck by autophosphorylation at a novel site in the unique domain.</title>
        <authorList>
            <person name="Johnson T.M."/>
            <person name="Williamson N.A."/>
            <person name="Scholz G."/>
            <person name="Jaworowski A."/>
            <person name="Wettenhall R.E."/>
            <person name="Dunn A.R."/>
            <person name="Cheng H.C."/>
        </authorList>
    </citation>
    <scope>PHOSPHORYLATION AT TYR-50 AND TYR-409</scope>
    <scope>MUTAGENESIS OF TYR-409</scope>
    <scope>ACTIVITY REGULATION</scope>
</reference>
<reference key="13">
    <citation type="journal article" date="2002" name="J. Biol. Chem.">
        <title>Phosphorylation of tyrosine 291 enhances the ability of WASp to stimulate actin polymerization and filopodium formation. Wiskott-Aldrich Syndrome protein.</title>
        <authorList>
            <person name="Cory G.O."/>
            <person name="Garg R."/>
            <person name="Cramer R."/>
            <person name="Ridley A.J."/>
        </authorList>
    </citation>
    <scope>FUNCTION IN PHOSPHORYLATION OF WAS</scope>
    <scope>INTERACTION WITH WAS</scope>
</reference>
<reference key="14">
    <citation type="journal article" date="2003" name="J. Biol. Chem.">
        <title>Physical and functional interaction between Hck tyrosine kinase and guanine nucleotide exchange factor C3G results in apoptosis, which is independent of C3G catalytic domain.</title>
        <authorList>
            <person name="Shivakrupa R."/>
            <person name="Radha V."/>
            <person name="Sudhakar C."/>
            <person name="Swarup G."/>
        </authorList>
    </citation>
    <scope>INTERACTION WITH RAPGEF1</scope>
    <scope>FUNCTION IN REGULATION OF APOPTOSIS</scope>
</reference>
<reference key="15">
    <citation type="journal article" date="2006" name="Blood">
        <title>Identification of Y589 and Y599 in the juxtamembrane domain of Flt3 as ligand-induced autophosphorylation sites involved in binding of Src family kinases and the protein tyrosine phosphatase SHP2.</title>
        <authorList>
            <person name="Heiss E."/>
            <person name="Masson K."/>
            <person name="Sundberg C."/>
            <person name="Pedersen M."/>
            <person name="Sun J."/>
            <person name="Bengtsson S."/>
            <person name="Ronnstrand L."/>
        </authorList>
    </citation>
    <scope>INTERACTION WITH FLT3</scope>
</reference>
<reference key="16">
    <citation type="journal article" date="2006" name="Cell. Signal.">
        <title>CpG DNA enhances macrophage cell spreading by promoting the Src-family kinase-mediated phosphorylation of paxillin.</title>
        <authorList>
            <person name="Achuthan A."/>
            <person name="Elsegood C."/>
            <person name="Masendycz P."/>
            <person name="Hamilton J.A."/>
            <person name="Scholz G.M."/>
        </authorList>
    </citation>
    <scope>FUNCTION</scope>
</reference>
<reference key="17">
    <citation type="journal article" date="2007" name="Blood">
        <title>The Src family kinase Hck regulates mast cell activation by suppressing an inhibitory Src family kinase Lyn.</title>
        <authorList>
            <person name="Hong H."/>
            <person name="Kitaura J."/>
            <person name="Xiao W."/>
            <person name="Horejsi V."/>
            <person name="Ra C."/>
            <person name="Lowell C.A."/>
            <person name="Kawakami Y."/>
            <person name="Kawakami T."/>
        </authorList>
    </citation>
    <scope>FUNCTION</scope>
</reference>
<reference key="18">
    <citation type="journal article" date="2008" name="J. Clin. Invest.">
        <title>Regulation of myeloproliferation and M2 macrophage programming in mice by Lyn/Hck, SHIP, and Stat5.</title>
        <authorList>
            <person name="Xiao W."/>
            <person name="Hong H."/>
            <person name="Kawakami Y."/>
            <person name="Lowell C.A."/>
            <person name="Kawakami T."/>
        </authorList>
    </citation>
    <scope>FUNCTION</scope>
</reference>
<reference key="19">
    <citation type="journal article" date="2008" name="J. Leukoc. Biol.">
        <title>Myeloid Src kinases regulate phagocytosis and oxidative burst in pneumococcal meningitis by activating NADPH oxidase.</title>
        <authorList>
            <person name="Paul R."/>
            <person name="Obermaier B."/>
            <person name="Van Ziffle J."/>
            <person name="Angele B."/>
            <person name="Pfister H.W."/>
            <person name="Lowell C.A."/>
            <person name="Koedel U."/>
        </authorList>
    </citation>
    <scope>FUNCTION</scope>
</reference>
<reference key="20">
    <citation type="journal article" date="2009" name="Immunity">
        <title>The phagosomal proteome in interferon-gamma-activated macrophages.</title>
        <authorList>
            <person name="Trost M."/>
            <person name="English L."/>
            <person name="Lemieux S."/>
            <person name="Courcelles M."/>
            <person name="Desjardins M."/>
            <person name="Thibault P."/>
        </authorList>
    </citation>
    <scope>PHOSPHORYLATION [LARGE SCALE ANALYSIS] AT TYR-207 AND TYR-520</scope>
    <scope>IDENTIFICATION BY MASS SPECTROMETRY [LARGE SCALE ANALYSIS]</scope>
</reference>
<reference key="21">
    <citation type="journal article" date="2010" name="Blood">
        <title>Three-dimensional migration of macrophages requires Hck for podosome organization and extracellular matrix proteolysis.</title>
        <authorList>
            <person name="Cougoule C."/>
            <person name="Le Cabec V."/>
            <person name="Poincloux R."/>
            <person name="Al Saati T."/>
            <person name="Mege J.L."/>
            <person name="Tabouret G."/>
            <person name="Lowell C.A."/>
            <person name="Laviolette-Malirat N."/>
            <person name="Maridonneau-Parini I."/>
        </authorList>
    </citation>
    <scope>FUNCTION</scope>
</reference>
<reference key="22">
    <citation type="journal article" date="2010" name="Cell">
        <title>A tissue-specific atlas of mouse protein phosphorylation and expression.</title>
        <authorList>
            <person name="Huttlin E.L."/>
            <person name="Jedrychowski M.P."/>
            <person name="Elias J.E."/>
            <person name="Goswami T."/>
            <person name="Rad R."/>
            <person name="Beausoleil S.A."/>
            <person name="Villen J."/>
            <person name="Haas W."/>
            <person name="Sowa M.E."/>
            <person name="Gygi S.P."/>
        </authorList>
    </citation>
    <scope>IDENTIFICATION BY MASS SPECTROMETRY [LARGE SCALE ANALYSIS]</scope>
    <source>
        <tissue>Lung</tissue>
        <tissue>Spleen</tissue>
    </source>
</reference>
<reference key="23">
    <citation type="journal article" date="2010" name="FEBS Lett.">
        <title>c-Abl and Src-family kinases cross-talk in regulation of myeloid cell migration.</title>
        <authorList>
            <person name="Baruzzi A."/>
            <person name="Iacobucci I."/>
            <person name="Soverini S."/>
            <person name="Lowell C.A."/>
            <person name="Martinelli G."/>
            <person name="Berton G."/>
        </authorList>
    </citation>
    <scope>FUNCTION IN MYELOID CELL MIGRATION</scope>
    <scope>INTERACTION WITH ABL1</scope>
</reference>
<keyword id="KW-0024">Alternative initiation</keyword>
<keyword id="KW-0067">ATP-binding</keyword>
<keyword id="KW-0965">Cell junction</keyword>
<keyword id="KW-1003">Cell membrane</keyword>
<keyword id="KW-0966">Cell projection</keyword>
<keyword id="KW-0963">Cytoplasm</keyword>
<keyword id="KW-0968">Cytoplasmic vesicle</keyword>
<keyword id="KW-0206">Cytoskeleton</keyword>
<keyword id="KW-0268">Exocytosis</keyword>
<keyword id="KW-0333">Golgi apparatus</keyword>
<keyword id="KW-0391">Immunity</keyword>
<keyword id="KW-0395">Inflammatory response</keyword>
<keyword id="KW-0399">Innate immunity</keyword>
<keyword id="KW-0418">Kinase</keyword>
<keyword id="KW-0449">Lipoprotein</keyword>
<keyword id="KW-0458">Lysosome</keyword>
<keyword id="KW-0472">Membrane</keyword>
<keyword id="KW-0519">Myristate</keyword>
<keyword id="KW-0547">Nucleotide-binding</keyword>
<keyword id="KW-0539">Nucleus</keyword>
<keyword id="KW-0564">Palmitate</keyword>
<keyword id="KW-0581">Phagocytosis</keyword>
<keyword id="KW-0597">Phosphoprotein</keyword>
<keyword id="KW-0656">Proto-oncogene</keyword>
<keyword id="KW-1185">Reference proteome</keyword>
<keyword id="KW-0727">SH2 domain</keyword>
<keyword id="KW-0728">SH3 domain</keyword>
<keyword id="KW-0808">Transferase</keyword>
<keyword id="KW-0829">Tyrosine-protein kinase</keyword>
<keyword id="KW-0832">Ubl conjugation</keyword>